<accession>L0E2V1</accession>
<comment type="function">
    <text evidence="4 5 8">Cytochrome P450 monooxygenase; part of the gene cluster that mediates the biosynthesis of paraherquamide, a fungal indole alkaloid that belongs to a family of natural products containing a characteristic bicyclo[2.2.2]diazaoctane core (PubMed:23213353). The first steps in the biosynthesis of paraherquamide is the production of the beta-methyl-proline precursor from L-isoleucine (Probable). They require oxidation of a terminally hydroxylated L-isoleucine to the corresponding aldehyde by enzymes which have still to be identified (Probable). Spontaneous cyclization and dehydration would yield the 4-methyl pyrolline-5-carboxylic acid, which is then reduced by the pyrroline-5-carboxylate reductase phqD leading to the beta-methyl-proline precursor (Probable). The next step of paraherquamide biosynthesis involves coupling of beta-methyl-proline and L-tryptophan by the bimodular NRPS phqB, to produce a monooxopiperazine intermediate (Probable). The reductase (R) domain of phqB utilizes NADPH for hydride transfer to reduce the thioester bond of the T domain-tethered linear dipeptide to a hemithioaminal intermediate, which spontaneously cleaves the C-S bond to release the aldehyde product (PubMed:31548667). This compound undergoes spontaneous cyclization and dehydration to give a dienamine which is reverse prenylated at C-2 by the reverse prenyltransferase phqJ (Probable). The other prenyltransferase present in the cluster, phqI may be a redundant gene in the pathway (Probable). During biosynthetic assembly, the key step to produce the polycyclic core is catalyzed by the bifunctional reductase and intramolecular [4+2] Diels-Alderase, phqE, resulting in formation of the [2.2.2] diazaoctane intermediate preparaherquamide (PubMed:31548667). Following formation of preparaherquamide, an indole 2,3-epoxidation-initiated pinacol-like rearrangement is catalyzed by the phqK FAD-dependent monooxygenase (Probable). The prenyltransferase phqA, the cytochrome P450 monooxygenase phqL, and the FAD-linked oxidoreductase phqH (or the cytochrome P450 monooxygenase phqM), are proposed to be involved in the formation of the pyran ring (Probable). The FAD-dependent monooxygenase phqK is likely responsible for generation of the spiro-oxindole, and the N-methylation is likely mediated by the phqN methyltransferase leading to the isolable natural product paraherquamide F (Probable). However, the order of these biosynthetic steps has still to be determined (Probable). In late-stage paraherquamide biosynthesis, the third P450 monooxygenase, phqO, is probably responsible for the C-14 hydroxylation, transforming paraherquamide F to paraherquamide G, and paraherquamide E to the final product paraherquamide A (Probable). The expansion from the 6-membered ring pyran (in paraherquamides F and G) to the 7-membered dioxepin ring (in paraherquamides A and E) represents a poorly understood but intriguing process that probably involves the 2-oxoglutarate-dependent dioxygenase phqC (Probable). Finally, the remaining members of the paraherquamide cluster, including phqI as well as phqM (or phqH), do not have a clearly prescribed role and appear to be redundant (Probable).</text>
</comment>
<comment type="cofactor">
    <cofactor evidence="1">
        <name>heme</name>
        <dbReference type="ChEBI" id="CHEBI:30413"/>
    </cofactor>
</comment>
<comment type="pathway">
    <text evidence="8">Alkaloid biosynthesis.</text>
</comment>
<comment type="subcellular location">
    <subcellularLocation>
        <location evidence="2">Membrane</location>
        <topology evidence="2">Multi-pass membrane protein</topology>
    </subcellularLocation>
</comment>
<comment type="similarity">
    <text evidence="7">Belongs to the cytochrome P450 family.</text>
</comment>
<name>PHQL_PENFE</name>
<sequence>MEPHHDGHILKVLPMLASNENFSRLTTAFVAGIAAHIIIFRRGEWDIAAARIPVGLFILQSCLFSYYLFVPGPPTSIYTALWLVGQITLGFIAGTTVSILSYRAFFHRLNSFPGPFPARLSMWYVTSLYAQNPDAFNTVRGLHQQYGDFVRTGPTELSVNHPDALQAVHSGRSECTKGPWYSMLHPFISLFAIRDKAEHSRRRKPWELAFRPNAVLEYLPALEKGTNELLEQVERRKGKSMDMTYWINLFTFDLTGRVAFSQEYECVKHNKRHPIMEINDSSNLVTGVVSHVVWLISFIKATPGLNANMKALIGFSEEQVQNRQKMQTSGQRDVFSWLWEDFKEQGMETPQSKLDLVADASLVIFAGSGTVAVTIIGCLYFLTSTSPDYLTQIRQELDTLDEINSHTLSKVQTLNAVINETLRLHYPALSGFQRQTPPGGLHIAGRYIPGNTNIKIPFYTLFLDERNFAEPEKFIPERWTTRKELVKNPEAFAPFLLGPYNCLGKSLALMQVRHVLVELIRRYEIVLAPGADPEKYWRERTDGFVMGLAPLDLAFTEREMAGF</sequence>
<gene>
    <name evidence="6" type="primary">phqL</name>
</gene>
<proteinExistence type="inferred from homology"/>
<dbReference type="EC" id="1.-.-.-" evidence="8"/>
<dbReference type="EMBL" id="JQ708195">
    <property type="protein sequence ID" value="AGA37279.1"/>
    <property type="molecule type" value="Genomic_DNA"/>
</dbReference>
<dbReference type="SMR" id="L0E2V1"/>
<dbReference type="GlyCosmos" id="L0E2V1">
    <property type="glycosylation" value="2 sites, No reported glycans"/>
</dbReference>
<dbReference type="GO" id="GO:0016020">
    <property type="term" value="C:membrane"/>
    <property type="evidence" value="ECO:0007669"/>
    <property type="project" value="UniProtKB-SubCell"/>
</dbReference>
<dbReference type="GO" id="GO:0020037">
    <property type="term" value="F:heme binding"/>
    <property type="evidence" value="ECO:0007669"/>
    <property type="project" value="InterPro"/>
</dbReference>
<dbReference type="GO" id="GO:0005506">
    <property type="term" value="F:iron ion binding"/>
    <property type="evidence" value="ECO:0007669"/>
    <property type="project" value="InterPro"/>
</dbReference>
<dbReference type="GO" id="GO:0004497">
    <property type="term" value="F:monooxygenase activity"/>
    <property type="evidence" value="ECO:0007669"/>
    <property type="project" value="UniProtKB-KW"/>
</dbReference>
<dbReference type="GO" id="GO:0016705">
    <property type="term" value="F:oxidoreductase activity, acting on paired donors, with incorporation or reduction of molecular oxygen"/>
    <property type="evidence" value="ECO:0007669"/>
    <property type="project" value="InterPro"/>
</dbReference>
<dbReference type="GO" id="GO:0043386">
    <property type="term" value="P:mycotoxin biosynthetic process"/>
    <property type="evidence" value="ECO:0007669"/>
    <property type="project" value="UniProtKB-ARBA"/>
</dbReference>
<dbReference type="CDD" id="cd11061">
    <property type="entry name" value="CYP67-like"/>
    <property type="match status" value="1"/>
</dbReference>
<dbReference type="Gene3D" id="1.10.630.10">
    <property type="entry name" value="Cytochrome P450"/>
    <property type="match status" value="1"/>
</dbReference>
<dbReference type="InterPro" id="IPR001128">
    <property type="entry name" value="Cyt_P450"/>
</dbReference>
<dbReference type="InterPro" id="IPR002403">
    <property type="entry name" value="Cyt_P450_E_grp-IV"/>
</dbReference>
<dbReference type="InterPro" id="IPR036396">
    <property type="entry name" value="Cyt_P450_sf"/>
</dbReference>
<dbReference type="InterPro" id="IPR050121">
    <property type="entry name" value="Cytochrome_P450_monoxygenase"/>
</dbReference>
<dbReference type="PANTHER" id="PTHR24305">
    <property type="entry name" value="CYTOCHROME P450"/>
    <property type="match status" value="1"/>
</dbReference>
<dbReference type="PANTHER" id="PTHR24305:SF187">
    <property type="entry name" value="P450, PUTATIVE (EUROFUNG)-RELATED"/>
    <property type="match status" value="1"/>
</dbReference>
<dbReference type="Pfam" id="PF00067">
    <property type="entry name" value="p450"/>
    <property type="match status" value="1"/>
</dbReference>
<dbReference type="PRINTS" id="PR00465">
    <property type="entry name" value="EP450IV"/>
</dbReference>
<dbReference type="PRINTS" id="PR00385">
    <property type="entry name" value="P450"/>
</dbReference>
<dbReference type="SUPFAM" id="SSF48264">
    <property type="entry name" value="Cytochrome P450"/>
    <property type="match status" value="1"/>
</dbReference>
<feature type="chain" id="PRO_0000448873" description="Cytochrome P450 monooxygenase phqL">
    <location>
        <begin position="1"/>
        <end position="563"/>
    </location>
</feature>
<feature type="transmembrane region" description="Helical" evidence="2">
    <location>
        <begin position="20"/>
        <end position="40"/>
    </location>
</feature>
<feature type="transmembrane region" description="Helical" evidence="2">
    <location>
        <begin position="52"/>
        <end position="72"/>
    </location>
</feature>
<feature type="transmembrane region" description="Helical" evidence="2">
    <location>
        <begin position="80"/>
        <end position="100"/>
    </location>
</feature>
<feature type="transmembrane region" description="Helical" evidence="2">
    <location>
        <begin position="362"/>
        <end position="382"/>
    </location>
</feature>
<feature type="binding site" description="axial binding residue" evidence="1">
    <location>
        <position position="502"/>
    </location>
    <ligand>
        <name>heme</name>
        <dbReference type="ChEBI" id="CHEBI:30413"/>
    </ligand>
    <ligandPart>
        <name>Fe</name>
        <dbReference type="ChEBI" id="CHEBI:18248"/>
    </ligandPart>
</feature>
<feature type="glycosylation site" description="N-linked (GlcNAc...) asparagine" evidence="3">
    <location>
        <position position="279"/>
    </location>
</feature>
<feature type="glycosylation site" description="N-linked (GlcNAc...) asparagine" evidence="3">
    <location>
        <position position="419"/>
    </location>
</feature>
<evidence type="ECO:0000250" key="1">
    <source>
        <dbReference type="UniProtKB" id="P04798"/>
    </source>
</evidence>
<evidence type="ECO:0000255" key="2"/>
<evidence type="ECO:0000255" key="3">
    <source>
        <dbReference type="PROSITE-ProRule" id="PRU00498"/>
    </source>
</evidence>
<evidence type="ECO:0000269" key="4">
    <source>
    </source>
</evidence>
<evidence type="ECO:0000269" key="5">
    <source>
    </source>
</evidence>
<evidence type="ECO:0000303" key="6">
    <source>
    </source>
</evidence>
<evidence type="ECO:0000305" key="7"/>
<evidence type="ECO:0000305" key="8">
    <source>
    </source>
</evidence>
<reference key="1">
    <citation type="journal article" date="2012" name="Med. Chem. Commun.">
        <title>Comparative analysis of the biosynthetic systems for fungal bicyclo[2.2.2]diazaoctane indole alkaloids: the (+)/(-)-notoamide, paraherquamide and malbrancheamide pathways.</title>
        <authorList>
            <person name="Li S."/>
            <person name="Anand K."/>
            <person name="Tran H."/>
            <person name="Yu F."/>
            <person name="Finefield J.M."/>
            <person name="Sunderhaus J.D."/>
            <person name="McAfoos T.J."/>
            <person name="Tsukamoto S."/>
            <person name="Williams R.M."/>
            <person name="Sherman D.H."/>
        </authorList>
    </citation>
    <scope>NUCLEOTIDE SEQUENCE [GENOMIC DNA]</scope>
    <scope>FUNCTION</scope>
    <scope>PATHWAY</scope>
    <source>
        <strain>ATCC 20841 / MF5123</strain>
    </source>
</reference>
<reference key="2">
    <citation type="journal article" date="2019" name="Nat. Chem.">
        <title>Fungal indole alkaloid biogenesis through evolution of a bifunctional reductase/Diels-Alderase.</title>
        <authorList>
            <person name="Dan Q."/>
            <person name="Newmister S.A."/>
            <person name="Klas K.R."/>
            <person name="Fraley A.E."/>
            <person name="McAfoos T.J."/>
            <person name="Somoza A.D."/>
            <person name="Sunderhaus J.D."/>
            <person name="Ye Y."/>
            <person name="Shende V.V."/>
            <person name="Yu F."/>
            <person name="Sanders J.N."/>
            <person name="Brown W.C."/>
            <person name="Zhao L."/>
            <person name="Paton R.S."/>
            <person name="Houk K.N."/>
            <person name="Smith J.L."/>
            <person name="Sherman D.H."/>
            <person name="Williams R.M."/>
        </authorList>
    </citation>
    <scope>FUNCTION</scope>
</reference>
<protein>
    <recommendedName>
        <fullName evidence="6">Cytochrome P450 monooxygenase phqL</fullName>
        <ecNumber evidence="8">1.-.-.-</ecNumber>
    </recommendedName>
    <alternativeName>
        <fullName evidence="6">Paraherquamide biosynthesis cluster protein L</fullName>
    </alternativeName>
</protein>
<organism>
    <name type="scientific">Penicillium fellutanum</name>
    <dbReference type="NCBI Taxonomy" id="70095"/>
    <lineage>
        <taxon>Eukaryota</taxon>
        <taxon>Fungi</taxon>
        <taxon>Dikarya</taxon>
        <taxon>Ascomycota</taxon>
        <taxon>Pezizomycotina</taxon>
        <taxon>Eurotiomycetes</taxon>
        <taxon>Eurotiomycetidae</taxon>
        <taxon>Eurotiales</taxon>
        <taxon>Aspergillaceae</taxon>
        <taxon>Penicillium</taxon>
    </lineage>
</organism>
<keyword id="KW-0325">Glycoprotein</keyword>
<keyword id="KW-0349">Heme</keyword>
<keyword id="KW-0408">Iron</keyword>
<keyword id="KW-0472">Membrane</keyword>
<keyword id="KW-0479">Metal-binding</keyword>
<keyword id="KW-0503">Monooxygenase</keyword>
<keyword id="KW-0560">Oxidoreductase</keyword>
<keyword id="KW-0812">Transmembrane</keyword>
<keyword id="KW-1133">Transmembrane helix</keyword>